<comment type="function">
    <text evidence="1">Catalyzes the attachment of serine to tRNA(Ser). Is also able to aminoacylate tRNA(Sec) with serine, to form the misacylated tRNA L-seryl-tRNA(Sec), which will be further converted into selenocysteinyl-tRNA(Sec).</text>
</comment>
<comment type="catalytic activity">
    <reaction evidence="1">
        <text>tRNA(Ser) + L-serine + ATP = L-seryl-tRNA(Ser) + AMP + diphosphate + H(+)</text>
        <dbReference type="Rhea" id="RHEA:12292"/>
        <dbReference type="Rhea" id="RHEA-COMP:9669"/>
        <dbReference type="Rhea" id="RHEA-COMP:9703"/>
        <dbReference type="ChEBI" id="CHEBI:15378"/>
        <dbReference type="ChEBI" id="CHEBI:30616"/>
        <dbReference type="ChEBI" id="CHEBI:33019"/>
        <dbReference type="ChEBI" id="CHEBI:33384"/>
        <dbReference type="ChEBI" id="CHEBI:78442"/>
        <dbReference type="ChEBI" id="CHEBI:78533"/>
        <dbReference type="ChEBI" id="CHEBI:456215"/>
        <dbReference type="EC" id="6.1.1.11"/>
    </reaction>
</comment>
<comment type="catalytic activity">
    <reaction evidence="1">
        <text>tRNA(Sec) + L-serine + ATP = L-seryl-tRNA(Sec) + AMP + diphosphate + H(+)</text>
        <dbReference type="Rhea" id="RHEA:42580"/>
        <dbReference type="Rhea" id="RHEA-COMP:9742"/>
        <dbReference type="Rhea" id="RHEA-COMP:10128"/>
        <dbReference type="ChEBI" id="CHEBI:15378"/>
        <dbReference type="ChEBI" id="CHEBI:30616"/>
        <dbReference type="ChEBI" id="CHEBI:33019"/>
        <dbReference type="ChEBI" id="CHEBI:33384"/>
        <dbReference type="ChEBI" id="CHEBI:78442"/>
        <dbReference type="ChEBI" id="CHEBI:78533"/>
        <dbReference type="ChEBI" id="CHEBI:456215"/>
        <dbReference type="EC" id="6.1.1.11"/>
    </reaction>
</comment>
<comment type="pathway">
    <text evidence="1">Aminoacyl-tRNA biosynthesis; selenocysteinyl-tRNA(Sec) biosynthesis; L-seryl-tRNA(Sec) from L-serine and tRNA(Sec): step 1/1.</text>
</comment>
<comment type="subunit">
    <text evidence="1">Homodimer. The tRNA molecule binds across the dimer.</text>
</comment>
<comment type="subcellular location">
    <subcellularLocation>
        <location evidence="1">Cytoplasm</location>
    </subcellularLocation>
</comment>
<comment type="domain">
    <text evidence="1">Consists of two distinct domains, a catalytic core and a N-terminal extension that is involved in tRNA binding.</text>
</comment>
<comment type="similarity">
    <text evidence="1">Belongs to the class-II aminoacyl-tRNA synthetase family. Type-1 seryl-tRNA synthetase subfamily.</text>
</comment>
<comment type="sequence caution" evidence="2">
    <conflict type="erroneous initiation">
        <sequence resource="EMBL-CDS" id="CAF20916"/>
    </conflict>
</comment>
<accession>Q8NLP6</accession>
<name>SYS_CORGL</name>
<protein>
    <recommendedName>
        <fullName evidence="1">Serine--tRNA ligase</fullName>
        <ecNumber evidence="1">6.1.1.11</ecNumber>
    </recommendedName>
    <alternativeName>
        <fullName evidence="1">Seryl-tRNA synthetase</fullName>
        <shortName evidence="1">SerRS</shortName>
    </alternativeName>
    <alternativeName>
        <fullName evidence="1">Seryl-tRNA(Ser/Sec) synthetase</fullName>
    </alternativeName>
</protein>
<feature type="chain" id="PRO_0000122039" description="Serine--tRNA ligase">
    <location>
        <begin position="1"/>
        <end position="422"/>
    </location>
</feature>
<feature type="binding site" evidence="1">
    <location>
        <begin position="226"/>
        <end position="228"/>
    </location>
    <ligand>
        <name>L-serine</name>
        <dbReference type="ChEBI" id="CHEBI:33384"/>
    </ligand>
</feature>
<feature type="binding site" evidence="1">
    <location>
        <begin position="257"/>
        <end position="259"/>
    </location>
    <ligand>
        <name>ATP</name>
        <dbReference type="ChEBI" id="CHEBI:30616"/>
    </ligand>
</feature>
<feature type="binding site" evidence="1">
    <location>
        <position position="273"/>
    </location>
    <ligand>
        <name>ATP</name>
        <dbReference type="ChEBI" id="CHEBI:30616"/>
    </ligand>
</feature>
<feature type="binding site" evidence="1">
    <location>
        <position position="280"/>
    </location>
    <ligand>
        <name>L-serine</name>
        <dbReference type="ChEBI" id="CHEBI:33384"/>
    </ligand>
</feature>
<feature type="binding site" evidence="1">
    <location>
        <begin position="344"/>
        <end position="347"/>
    </location>
    <ligand>
        <name>ATP</name>
        <dbReference type="ChEBI" id="CHEBI:30616"/>
    </ligand>
</feature>
<feature type="binding site" evidence="1">
    <location>
        <position position="379"/>
    </location>
    <ligand>
        <name>L-serine</name>
        <dbReference type="ChEBI" id="CHEBI:33384"/>
    </ligand>
</feature>
<keyword id="KW-0030">Aminoacyl-tRNA synthetase</keyword>
<keyword id="KW-0067">ATP-binding</keyword>
<keyword id="KW-0963">Cytoplasm</keyword>
<keyword id="KW-0436">Ligase</keyword>
<keyword id="KW-0547">Nucleotide-binding</keyword>
<keyword id="KW-0648">Protein biosynthesis</keyword>
<keyword id="KW-1185">Reference proteome</keyword>
<dbReference type="EC" id="6.1.1.11" evidence="1"/>
<dbReference type="EMBL" id="BA000036">
    <property type="protein sequence ID" value="BAC00287.1"/>
    <property type="molecule type" value="Genomic_DNA"/>
</dbReference>
<dbReference type="EMBL" id="BX927156">
    <property type="protein sequence ID" value="CAF20916.1"/>
    <property type="status" value="ALT_INIT"/>
    <property type="molecule type" value="Genomic_DNA"/>
</dbReference>
<dbReference type="RefSeq" id="NP_602083.2">
    <property type="nucleotide sequence ID" value="NC_003450.3"/>
</dbReference>
<dbReference type="RefSeq" id="WP_003857828.1">
    <property type="nucleotide sequence ID" value="NC_006958.1"/>
</dbReference>
<dbReference type="SMR" id="Q8NLP6"/>
<dbReference type="STRING" id="196627.cg3201"/>
<dbReference type="GeneID" id="1020836"/>
<dbReference type="KEGG" id="cgb:cg3201"/>
<dbReference type="KEGG" id="cgl:Cgl2893"/>
<dbReference type="PATRIC" id="fig|196627.13.peg.2824"/>
<dbReference type="eggNOG" id="COG0172">
    <property type="taxonomic scope" value="Bacteria"/>
</dbReference>
<dbReference type="HOGENOM" id="CLU_023797_0_1_11"/>
<dbReference type="OrthoDB" id="9804647at2"/>
<dbReference type="BioCyc" id="CORYNE:G18NG-12511-MONOMER"/>
<dbReference type="UniPathway" id="UPA00906">
    <property type="reaction ID" value="UER00895"/>
</dbReference>
<dbReference type="Proteomes" id="UP000000582">
    <property type="component" value="Chromosome"/>
</dbReference>
<dbReference type="Proteomes" id="UP000001009">
    <property type="component" value="Chromosome"/>
</dbReference>
<dbReference type="GO" id="GO:0005737">
    <property type="term" value="C:cytoplasm"/>
    <property type="evidence" value="ECO:0007669"/>
    <property type="project" value="UniProtKB-SubCell"/>
</dbReference>
<dbReference type="GO" id="GO:0005524">
    <property type="term" value="F:ATP binding"/>
    <property type="evidence" value="ECO:0007669"/>
    <property type="project" value="UniProtKB-UniRule"/>
</dbReference>
<dbReference type="GO" id="GO:0004828">
    <property type="term" value="F:serine-tRNA ligase activity"/>
    <property type="evidence" value="ECO:0007669"/>
    <property type="project" value="UniProtKB-UniRule"/>
</dbReference>
<dbReference type="GO" id="GO:0016260">
    <property type="term" value="P:selenocysteine biosynthetic process"/>
    <property type="evidence" value="ECO:0007669"/>
    <property type="project" value="UniProtKB-UniRule"/>
</dbReference>
<dbReference type="GO" id="GO:0006434">
    <property type="term" value="P:seryl-tRNA aminoacylation"/>
    <property type="evidence" value="ECO:0007669"/>
    <property type="project" value="UniProtKB-UniRule"/>
</dbReference>
<dbReference type="CDD" id="cd00770">
    <property type="entry name" value="SerRS_core"/>
    <property type="match status" value="1"/>
</dbReference>
<dbReference type="FunFam" id="1.10.287.40:FF:000004">
    <property type="entry name" value="Serine--tRNA ligase"/>
    <property type="match status" value="1"/>
</dbReference>
<dbReference type="Gene3D" id="3.30.930.10">
    <property type="entry name" value="Bira Bifunctional Protein, Domain 2"/>
    <property type="match status" value="1"/>
</dbReference>
<dbReference type="Gene3D" id="1.10.287.40">
    <property type="entry name" value="Serine-tRNA synthetase, tRNA binding domain"/>
    <property type="match status" value="1"/>
</dbReference>
<dbReference type="HAMAP" id="MF_00176">
    <property type="entry name" value="Ser_tRNA_synth_type1"/>
    <property type="match status" value="1"/>
</dbReference>
<dbReference type="InterPro" id="IPR002314">
    <property type="entry name" value="aa-tRNA-synt_IIb"/>
</dbReference>
<dbReference type="InterPro" id="IPR006195">
    <property type="entry name" value="aa-tRNA-synth_II"/>
</dbReference>
<dbReference type="InterPro" id="IPR045864">
    <property type="entry name" value="aa-tRNA-synth_II/BPL/LPL"/>
</dbReference>
<dbReference type="InterPro" id="IPR002317">
    <property type="entry name" value="Ser-tRNA-ligase_type_1"/>
</dbReference>
<dbReference type="InterPro" id="IPR015866">
    <property type="entry name" value="Ser-tRNA-synth_1_N"/>
</dbReference>
<dbReference type="InterPro" id="IPR042103">
    <property type="entry name" value="SerRS_1_N_sf"/>
</dbReference>
<dbReference type="InterPro" id="IPR033729">
    <property type="entry name" value="SerRS_core"/>
</dbReference>
<dbReference type="InterPro" id="IPR010978">
    <property type="entry name" value="tRNA-bd_arm"/>
</dbReference>
<dbReference type="NCBIfam" id="TIGR00414">
    <property type="entry name" value="serS"/>
    <property type="match status" value="1"/>
</dbReference>
<dbReference type="PANTHER" id="PTHR11778">
    <property type="entry name" value="SERYL-TRNA SYNTHETASE"/>
    <property type="match status" value="1"/>
</dbReference>
<dbReference type="Pfam" id="PF02403">
    <property type="entry name" value="Seryl_tRNA_N"/>
    <property type="match status" value="1"/>
</dbReference>
<dbReference type="Pfam" id="PF00587">
    <property type="entry name" value="tRNA-synt_2b"/>
    <property type="match status" value="1"/>
</dbReference>
<dbReference type="PIRSF" id="PIRSF001529">
    <property type="entry name" value="Ser-tRNA-synth_IIa"/>
    <property type="match status" value="1"/>
</dbReference>
<dbReference type="PRINTS" id="PR00981">
    <property type="entry name" value="TRNASYNTHSER"/>
</dbReference>
<dbReference type="SUPFAM" id="SSF55681">
    <property type="entry name" value="Class II aaRS and biotin synthetases"/>
    <property type="match status" value="1"/>
</dbReference>
<dbReference type="SUPFAM" id="SSF46589">
    <property type="entry name" value="tRNA-binding arm"/>
    <property type="match status" value="1"/>
</dbReference>
<dbReference type="PROSITE" id="PS50862">
    <property type="entry name" value="AA_TRNA_LIGASE_II"/>
    <property type="match status" value="1"/>
</dbReference>
<gene>
    <name evidence="1" type="primary">serS</name>
    <name type="ordered locus">Cgl2893</name>
    <name type="ordered locus">cg3201</name>
</gene>
<proteinExistence type="inferred from homology"/>
<organism>
    <name type="scientific">Corynebacterium glutamicum (strain ATCC 13032 / DSM 20300 / JCM 1318 / BCRC 11384 / CCUG 27702 / LMG 3730 / NBRC 12168 / NCIMB 10025 / NRRL B-2784 / 534)</name>
    <dbReference type="NCBI Taxonomy" id="196627"/>
    <lineage>
        <taxon>Bacteria</taxon>
        <taxon>Bacillati</taxon>
        <taxon>Actinomycetota</taxon>
        <taxon>Actinomycetes</taxon>
        <taxon>Mycobacteriales</taxon>
        <taxon>Corynebacteriaceae</taxon>
        <taxon>Corynebacterium</taxon>
    </lineage>
</organism>
<reference key="1">
    <citation type="journal article" date="2003" name="Appl. Microbiol. Biotechnol.">
        <title>The Corynebacterium glutamicum genome: features and impacts on biotechnological processes.</title>
        <authorList>
            <person name="Ikeda M."/>
            <person name="Nakagawa S."/>
        </authorList>
    </citation>
    <scope>NUCLEOTIDE SEQUENCE [LARGE SCALE GENOMIC DNA]</scope>
    <source>
        <strain>ATCC 13032 / DSM 20300 / JCM 1318 / BCRC 11384 / CCUG 27702 / LMG 3730 / NBRC 12168 / NCIMB 10025 / NRRL B-2784 / 534</strain>
    </source>
</reference>
<reference key="2">
    <citation type="journal article" date="2003" name="J. Biotechnol.">
        <title>The complete Corynebacterium glutamicum ATCC 13032 genome sequence and its impact on the production of L-aspartate-derived amino acids and vitamins.</title>
        <authorList>
            <person name="Kalinowski J."/>
            <person name="Bathe B."/>
            <person name="Bartels D."/>
            <person name="Bischoff N."/>
            <person name="Bott M."/>
            <person name="Burkovski A."/>
            <person name="Dusch N."/>
            <person name="Eggeling L."/>
            <person name="Eikmanns B.J."/>
            <person name="Gaigalat L."/>
            <person name="Goesmann A."/>
            <person name="Hartmann M."/>
            <person name="Huthmacher K."/>
            <person name="Kraemer R."/>
            <person name="Linke B."/>
            <person name="McHardy A.C."/>
            <person name="Meyer F."/>
            <person name="Moeckel B."/>
            <person name="Pfefferle W."/>
            <person name="Puehler A."/>
            <person name="Rey D.A."/>
            <person name="Rueckert C."/>
            <person name="Rupp O."/>
            <person name="Sahm H."/>
            <person name="Wendisch V.F."/>
            <person name="Wiegraebe I."/>
            <person name="Tauch A."/>
        </authorList>
    </citation>
    <scope>NUCLEOTIDE SEQUENCE [LARGE SCALE GENOMIC DNA]</scope>
    <source>
        <strain>ATCC 13032 / DSM 20300 / JCM 1318 / BCRC 11384 / CCUG 27702 / LMG 3730 / NBRC 12168 / NCIMB 10025 / NRRL B-2784 / 534</strain>
    </source>
</reference>
<sequence length="422" mass="46472">MIDLKFLRDNPDVVRASQITRGEDPALVDELISADESRREAIKAADDLRAEQKAFGKKIGQASPEDRPALLEGSNELKAKVKDAEAAQEAAEAKVNELQMKLSNVVSGAPAGGEDDFVVLETIGEPRTFDFEPKDHLELGESLGLIDMKRGTKVSGARFYYLTGDGAMLQLGMLMLAAQKAREAGFSMMIPPVLVRPEIMAGTGFLGDHSEEIYYLERDDMYLVGTSEVALAGYHKDEIIDLNEGPVKYAGWSSCFRREAGSYGKDTRGILRVHQFDKVEMFVYCKPEDAEDVHQQLLGMEKEMLAAIEVPYRVIDVAGGDLGASAARKFDTEAWVPTQDTYRELTSTSNCTTFQARRLQTRYRDENGKPQIAATLNGTLATTRWLVAILENNQQADGSVVVPEALRPFVGKDVLKPVKQAG</sequence>
<evidence type="ECO:0000255" key="1">
    <source>
        <dbReference type="HAMAP-Rule" id="MF_00176"/>
    </source>
</evidence>
<evidence type="ECO:0000305" key="2"/>